<accession>Q9PK92</accession>
<dbReference type="EC" id="2.7.11.1" evidence="1"/>
<dbReference type="EMBL" id="AE002160">
    <property type="protein sequence ID" value="AAF73573.1"/>
    <property type="molecule type" value="Genomic_DNA"/>
</dbReference>
<dbReference type="RefSeq" id="WP_010230882.1">
    <property type="nucleotide sequence ID" value="NZ_CP063055.1"/>
</dbReference>
<dbReference type="SMR" id="Q9PK92"/>
<dbReference type="GeneID" id="1245934"/>
<dbReference type="KEGG" id="cmu:TC_0575"/>
<dbReference type="eggNOG" id="COG0515">
    <property type="taxonomic scope" value="Bacteria"/>
</dbReference>
<dbReference type="HOGENOM" id="CLU_303227_0_0_0"/>
<dbReference type="OrthoDB" id="9788659at2"/>
<dbReference type="Proteomes" id="UP000000800">
    <property type="component" value="Chromosome"/>
</dbReference>
<dbReference type="GO" id="GO:0005524">
    <property type="term" value="F:ATP binding"/>
    <property type="evidence" value="ECO:0007669"/>
    <property type="project" value="UniProtKB-KW"/>
</dbReference>
<dbReference type="GO" id="GO:0106310">
    <property type="term" value="F:protein serine kinase activity"/>
    <property type="evidence" value="ECO:0007669"/>
    <property type="project" value="RHEA"/>
</dbReference>
<dbReference type="GO" id="GO:0004674">
    <property type="term" value="F:protein serine/threonine kinase activity"/>
    <property type="evidence" value="ECO:0007669"/>
    <property type="project" value="UniProtKB-UniRule"/>
</dbReference>
<dbReference type="CDD" id="cd14014">
    <property type="entry name" value="STKc_PknB_like"/>
    <property type="match status" value="1"/>
</dbReference>
<dbReference type="Gene3D" id="3.30.200.20">
    <property type="entry name" value="Phosphorylase Kinase, domain 1"/>
    <property type="match status" value="1"/>
</dbReference>
<dbReference type="Gene3D" id="1.25.40.10">
    <property type="entry name" value="Tetratricopeptide repeat domain"/>
    <property type="match status" value="1"/>
</dbReference>
<dbReference type="Gene3D" id="1.10.510.10">
    <property type="entry name" value="Transferase(Phosphotransferase) domain 1"/>
    <property type="match status" value="1"/>
</dbReference>
<dbReference type="HAMAP" id="MF_01957">
    <property type="entry name" value="PknD_kinase"/>
    <property type="match status" value="1"/>
</dbReference>
<dbReference type="InterPro" id="IPR011009">
    <property type="entry name" value="Kinase-like_dom_sf"/>
</dbReference>
<dbReference type="InterPro" id="IPR000719">
    <property type="entry name" value="Prot_kinase_dom"/>
</dbReference>
<dbReference type="InterPro" id="IPR017441">
    <property type="entry name" value="Protein_kinase_ATP_BS"/>
</dbReference>
<dbReference type="InterPro" id="IPR008271">
    <property type="entry name" value="Ser/Thr_kinase_AS"/>
</dbReference>
<dbReference type="InterPro" id="IPR023507">
    <property type="entry name" value="Ser/Thr_kinase_PknD"/>
</dbReference>
<dbReference type="InterPro" id="IPR011990">
    <property type="entry name" value="TPR-like_helical_dom_sf"/>
</dbReference>
<dbReference type="NCBIfam" id="NF009651">
    <property type="entry name" value="PRK13184.1"/>
    <property type="match status" value="1"/>
</dbReference>
<dbReference type="PANTHER" id="PTHR43289">
    <property type="entry name" value="MITOGEN-ACTIVATED PROTEIN KINASE KINASE KINASE 20-RELATED"/>
    <property type="match status" value="1"/>
</dbReference>
<dbReference type="PANTHER" id="PTHR43289:SF34">
    <property type="entry name" value="SERINE_THREONINE-PROTEIN KINASE YBDM-RELATED"/>
    <property type="match status" value="1"/>
</dbReference>
<dbReference type="Pfam" id="PF00069">
    <property type="entry name" value="Pkinase"/>
    <property type="match status" value="1"/>
</dbReference>
<dbReference type="SMART" id="SM00220">
    <property type="entry name" value="S_TKc"/>
    <property type="match status" value="1"/>
</dbReference>
<dbReference type="SUPFAM" id="SSF56112">
    <property type="entry name" value="Protein kinase-like (PK-like)"/>
    <property type="match status" value="1"/>
</dbReference>
<dbReference type="PROSITE" id="PS00107">
    <property type="entry name" value="PROTEIN_KINASE_ATP"/>
    <property type="match status" value="1"/>
</dbReference>
<dbReference type="PROSITE" id="PS50011">
    <property type="entry name" value="PROTEIN_KINASE_DOM"/>
    <property type="match status" value="1"/>
</dbReference>
<dbReference type="PROSITE" id="PS00108">
    <property type="entry name" value="PROTEIN_KINASE_ST"/>
    <property type="match status" value="1"/>
</dbReference>
<evidence type="ECO:0000255" key="1">
    <source>
        <dbReference type="HAMAP-Rule" id="MF_01957"/>
    </source>
</evidence>
<gene>
    <name evidence="1" type="primary">pknD</name>
    <name type="ordered locus">TC_0575</name>
</gene>
<reference key="1">
    <citation type="journal article" date="2000" name="Nucleic Acids Res.">
        <title>Genome sequences of Chlamydia trachomatis MoPn and Chlamydia pneumoniae AR39.</title>
        <authorList>
            <person name="Read T.D."/>
            <person name="Brunham R.C."/>
            <person name="Shen C."/>
            <person name="Gill S.R."/>
            <person name="Heidelberg J.F."/>
            <person name="White O."/>
            <person name="Hickey E.K."/>
            <person name="Peterson J.D."/>
            <person name="Utterback T.R."/>
            <person name="Berry K.J."/>
            <person name="Bass S."/>
            <person name="Linher K.D."/>
            <person name="Weidman J.F."/>
            <person name="Khouri H.M."/>
            <person name="Craven B."/>
            <person name="Bowman C."/>
            <person name="Dodson R.J."/>
            <person name="Gwinn M.L."/>
            <person name="Nelson W.C."/>
            <person name="DeBoy R.T."/>
            <person name="Kolonay J.F."/>
            <person name="McClarty G."/>
            <person name="Salzberg S.L."/>
            <person name="Eisen J.A."/>
            <person name="Fraser C.M."/>
        </authorList>
    </citation>
    <scope>NUCLEOTIDE SEQUENCE [LARGE SCALE GENOMIC DNA]</scope>
    <source>
        <strain>MoPn / Nigg</strain>
    </source>
</reference>
<name>PKND_CHLMU</name>
<sequence>MQRYELIRLIGRGGMGEVYLAHDKACSRRVALKKIREDLSDNPLLRKRFLREAKIAADLIHPGIVPVYSICSDGESVYYTMPYIEGFSLKHLLKSVWQKEILSKELEEKTSVKAFLPIFDKICATVEYIHSKGVLHRDLKPDNILLGLFGEVVIVDWGAAIFKHAKELQQEKDEEGFSSYGQKNICYSSMTVPGKIVGTPDYMAPESLLGAEASEKTDIYALGLILYQMLTLSFPYRRKKGRKLPYEDSILSPIEMAPYREIPPSLSQIAMKAIAVDPVQRFSSVQELRKALQPHLQGESEWTTRDILSTKDRKNWKYYEPILLSRYFPVLASSPAQWYNFMLSDMEVNSSVRVECSVTKSSVQEGVGIFFPPSKEADKGEFYCGYGLWFSSQNNELSVSLIKNGIEIQKESQGIIPQQSRFAISIEKSNNKITVFVDQILFILHIDYLPSLGERIEIIIQDLQGISNITILESIGALRVSCLAVPDAFLAEKLYDQAARFYRKIRDSFPGRKESYEAQFRLGVTLLTQIEEQGGDLMQALSTFDLLHGSTGAPLEYLGKALVYQRNGSFVEEIRSLLLALKRYPQHPEIPRLKDHLCFRLYDSLHKHRSEALVFMLLILWIAPEKIGLREEERFLEFLHHRQQSTLFCRIDKTPLQFKSSKMELFLSFWTGFTLFLPELFQRARDLRDYQALIDIFYVVCASGNKEVFSQFAEDLAIFVDEVVFPKSLHNQRGEELVLFVQGLAALQNREYRQAKEFISAVPFALQLYALDLFSLQAFIDEEVKVFSDFLQDIYNSASAEDHKHVLVYMIQVSLWNQDLKQAYELLSKNFPQDKGLIEYSEAFVLWGCYLALTGDRSAVKAHFSRCQFKYGRSALIGKCIDDDSLDYLEGLVWWEKKKTLFQSYFLLRCLHAPKERYEVYRQAYISMENSFFG</sequence>
<organism>
    <name type="scientific">Chlamydia muridarum (strain MoPn / Nigg)</name>
    <dbReference type="NCBI Taxonomy" id="243161"/>
    <lineage>
        <taxon>Bacteria</taxon>
        <taxon>Pseudomonadati</taxon>
        <taxon>Chlamydiota</taxon>
        <taxon>Chlamydiia</taxon>
        <taxon>Chlamydiales</taxon>
        <taxon>Chlamydiaceae</taxon>
        <taxon>Chlamydia/Chlamydophila group</taxon>
        <taxon>Chlamydia</taxon>
    </lineage>
</organism>
<keyword id="KW-0067">ATP-binding</keyword>
<keyword id="KW-0418">Kinase</keyword>
<keyword id="KW-0547">Nucleotide-binding</keyword>
<keyword id="KW-0597">Phosphoprotein</keyword>
<keyword id="KW-0723">Serine/threonine-protein kinase</keyword>
<keyword id="KW-0808">Transferase</keyword>
<feature type="chain" id="PRO_0000171191" description="Serine/threonine-protein kinase PknD">
    <location>
        <begin position="1"/>
        <end position="934"/>
    </location>
</feature>
<feature type="domain" description="Protein kinase" evidence="1">
    <location>
        <begin position="4"/>
        <end position="296"/>
    </location>
</feature>
<feature type="active site" description="Proton acceptor" evidence="1">
    <location>
        <position position="138"/>
    </location>
</feature>
<feature type="binding site" evidence="1">
    <location>
        <begin position="10"/>
        <end position="18"/>
    </location>
    <ligand>
        <name>ATP</name>
        <dbReference type="ChEBI" id="CHEBI:30616"/>
    </ligand>
</feature>
<feature type="binding site" evidence="1">
    <location>
        <position position="33"/>
    </location>
    <ligand>
        <name>ATP</name>
        <dbReference type="ChEBI" id="CHEBI:30616"/>
    </ligand>
</feature>
<comment type="function">
    <text evidence="1">Together with the serine/threonine kinase Pkn1, may play a role in the specific interactions with host proteins during intracellular growth.</text>
</comment>
<comment type="catalytic activity">
    <reaction evidence="1">
        <text>L-seryl-[protein] + ATP = O-phospho-L-seryl-[protein] + ADP + H(+)</text>
        <dbReference type="Rhea" id="RHEA:17989"/>
        <dbReference type="Rhea" id="RHEA-COMP:9863"/>
        <dbReference type="Rhea" id="RHEA-COMP:11604"/>
        <dbReference type="ChEBI" id="CHEBI:15378"/>
        <dbReference type="ChEBI" id="CHEBI:29999"/>
        <dbReference type="ChEBI" id="CHEBI:30616"/>
        <dbReference type="ChEBI" id="CHEBI:83421"/>
        <dbReference type="ChEBI" id="CHEBI:456216"/>
        <dbReference type="EC" id="2.7.11.1"/>
    </reaction>
</comment>
<comment type="catalytic activity">
    <reaction evidence="1">
        <text>L-threonyl-[protein] + ATP = O-phospho-L-threonyl-[protein] + ADP + H(+)</text>
        <dbReference type="Rhea" id="RHEA:46608"/>
        <dbReference type="Rhea" id="RHEA-COMP:11060"/>
        <dbReference type="Rhea" id="RHEA-COMP:11605"/>
        <dbReference type="ChEBI" id="CHEBI:15378"/>
        <dbReference type="ChEBI" id="CHEBI:30013"/>
        <dbReference type="ChEBI" id="CHEBI:30616"/>
        <dbReference type="ChEBI" id="CHEBI:61977"/>
        <dbReference type="ChEBI" id="CHEBI:456216"/>
        <dbReference type="EC" id="2.7.11.1"/>
    </reaction>
</comment>
<comment type="PTM">
    <text evidence="1">Autophosphorylated on serine and threonine residues.</text>
</comment>
<comment type="similarity">
    <text evidence="1">Belongs to the protein kinase superfamily. Ser/Thr protein kinase family.</text>
</comment>
<proteinExistence type="inferred from homology"/>
<protein>
    <recommendedName>
        <fullName evidence="1">Serine/threonine-protein kinase PknD</fullName>
        <ecNumber evidence="1">2.7.11.1</ecNumber>
    </recommendedName>
</protein>